<geneLocation type="mitochondrion"/>
<proteinExistence type="inferred from homology"/>
<keyword id="KW-0186">Copper</keyword>
<keyword id="KW-0249">Electron transport</keyword>
<keyword id="KW-0460">Magnesium</keyword>
<keyword id="KW-0472">Membrane</keyword>
<keyword id="KW-0479">Metal-binding</keyword>
<keyword id="KW-0496">Mitochondrion</keyword>
<keyword id="KW-0999">Mitochondrion inner membrane</keyword>
<keyword id="KW-1185">Reference proteome</keyword>
<keyword id="KW-0679">Respiratory chain</keyword>
<keyword id="KW-1278">Translocase</keyword>
<keyword id="KW-0812">Transmembrane</keyword>
<keyword id="KW-1133">Transmembrane helix</keyword>
<keyword id="KW-0813">Transport</keyword>
<feature type="chain" id="PRO_0000183615" description="Cytochrome c oxidase subunit 2">
    <location>
        <begin position="1"/>
        <end position="231"/>
    </location>
</feature>
<feature type="topological domain" description="Mitochondrial intermembrane" evidence="3">
    <location>
        <begin position="1"/>
        <end position="14"/>
    </location>
</feature>
<feature type="transmembrane region" description="Helical; Name=I" evidence="3">
    <location>
        <begin position="15"/>
        <end position="45"/>
    </location>
</feature>
<feature type="topological domain" description="Mitochondrial matrix" evidence="3">
    <location>
        <begin position="46"/>
        <end position="59"/>
    </location>
</feature>
<feature type="transmembrane region" description="Helical; Name=II" evidence="3">
    <location>
        <begin position="60"/>
        <end position="87"/>
    </location>
</feature>
<feature type="topological domain" description="Mitochondrial intermembrane" evidence="3">
    <location>
        <begin position="88"/>
        <end position="231"/>
    </location>
</feature>
<feature type="binding site" evidence="3">
    <location>
        <position position="161"/>
    </location>
    <ligand>
        <name>Cu cation</name>
        <dbReference type="ChEBI" id="CHEBI:23378"/>
        <label>A1</label>
    </ligand>
</feature>
<feature type="binding site" evidence="3">
    <location>
        <position position="196"/>
    </location>
    <ligand>
        <name>Cu cation</name>
        <dbReference type="ChEBI" id="CHEBI:23378"/>
        <label>A1</label>
    </ligand>
</feature>
<feature type="binding site" evidence="3">
    <location>
        <position position="196"/>
    </location>
    <ligand>
        <name>Cu cation</name>
        <dbReference type="ChEBI" id="CHEBI:23378"/>
        <label>A2</label>
    </ligand>
</feature>
<feature type="binding site" evidence="3">
    <location>
        <position position="198"/>
    </location>
    <ligand>
        <name>Cu cation</name>
        <dbReference type="ChEBI" id="CHEBI:23378"/>
        <label>A2</label>
    </ligand>
</feature>
<feature type="binding site" evidence="3">
    <location>
        <position position="198"/>
    </location>
    <ligand>
        <name>Mg(2+)</name>
        <dbReference type="ChEBI" id="CHEBI:18420"/>
        <note>ligand shared with MT-CO1</note>
    </ligand>
</feature>
<feature type="binding site" evidence="3">
    <location>
        <position position="200"/>
    </location>
    <ligand>
        <name>Cu cation</name>
        <dbReference type="ChEBI" id="CHEBI:23378"/>
        <label>A1</label>
    </ligand>
</feature>
<feature type="binding site" evidence="3">
    <location>
        <position position="200"/>
    </location>
    <ligand>
        <name>Cu cation</name>
        <dbReference type="ChEBI" id="CHEBI:23378"/>
        <label>A2</label>
    </ligand>
</feature>
<feature type="binding site" evidence="3">
    <location>
        <position position="204"/>
    </location>
    <ligand>
        <name>Cu cation</name>
        <dbReference type="ChEBI" id="CHEBI:23378"/>
        <label>A2</label>
    </ligand>
</feature>
<feature type="binding site" evidence="3">
    <location>
        <position position="207"/>
    </location>
    <ligand>
        <name>Cu cation</name>
        <dbReference type="ChEBI" id="CHEBI:23378"/>
        <label>A1</label>
    </ligand>
</feature>
<protein>
    <recommendedName>
        <fullName>Cytochrome c oxidase subunit 2</fullName>
        <ecNumber>7.1.1.9</ecNumber>
    </recommendedName>
    <alternativeName>
        <fullName>Cytochrome c oxidase polypeptide II</fullName>
    </alternativeName>
</protein>
<gene>
    <name type="primary">MT-CO2</name>
    <name type="synonym">COII</name>
    <name type="synonym">COXII</name>
    <name type="synonym">MTCO2</name>
</gene>
<evidence type="ECO:0000250" key="1">
    <source>
        <dbReference type="UniProtKB" id="P00403"/>
    </source>
</evidence>
<evidence type="ECO:0000250" key="2">
    <source>
        <dbReference type="UniProtKB" id="P00410"/>
    </source>
</evidence>
<evidence type="ECO:0000250" key="3">
    <source>
        <dbReference type="UniProtKB" id="P68530"/>
    </source>
</evidence>
<evidence type="ECO:0000305" key="4"/>
<comment type="function">
    <text evidence="2">Component of the cytochrome c oxidase, the last enzyme in the mitochondrial electron transport chain which drives oxidative phosphorylation. The respiratory chain contains 3 multisubunit complexes succinate dehydrogenase (complex II, CII), ubiquinol-cytochrome c oxidoreductase (cytochrome b-c1 complex, complex III, CIII) and cytochrome c oxidase (complex IV, CIV), that cooperate to transfer electrons derived from NADH and succinate to molecular oxygen, creating an electrochemical gradient over the inner membrane that drives transmembrane transport and the ATP synthase. Cytochrome c oxidase is the component of the respiratory chain that catalyzes the reduction of oxygen to water. Electrons originating from reduced cytochrome c in the intermembrane space (IMS) are transferred via the dinuclear copper A center (CU(A)) of subunit 2 and heme A of subunit 1 to the active site in subunit 1, a binuclear center (BNC) formed by heme A3 and copper B (CU(B)). The BNC reduces molecular oxygen to 2 water molecules using 4 electrons from cytochrome c in the IMS and 4 protons from the mitochondrial matrix.</text>
</comment>
<comment type="catalytic activity">
    <reaction evidence="2">
        <text>4 Fe(II)-[cytochrome c] + O2 + 8 H(+)(in) = 4 Fe(III)-[cytochrome c] + 2 H2O + 4 H(+)(out)</text>
        <dbReference type="Rhea" id="RHEA:11436"/>
        <dbReference type="Rhea" id="RHEA-COMP:10350"/>
        <dbReference type="Rhea" id="RHEA-COMP:14399"/>
        <dbReference type="ChEBI" id="CHEBI:15377"/>
        <dbReference type="ChEBI" id="CHEBI:15378"/>
        <dbReference type="ChEBI" id="CHEBI:15379"/>
        <dbReference type="ChEBI" id="CHEBI:29033"/>
        <dbReference type="ChEBI" id="CHEBI:29034"/>
        <dbReference type="EC" id="7.1.1.9"/>
    </reaction>
    <physiologicalReaction direction="left-to-right" evidence="2">
        <dbReference type="Rhea" id="RHEA:11437"/>
    </physiologicalReaction>
</comment>
<comment type="cofactor">
    <cofactor evidence="3">
        <name>Cu cation</name>
        <dbReference type="ChEBI" id="CHEBI:23378"/>
    </cofactor>
    <text evidence="3">Binds a dinuclear copper A center per subunit.</text>
</comment>
<comment type="subunit">
    <text evidence="1 3">Component of the cytochrome c oxidase (complex IV, CIV), a multisubunit enzyme composed of 14 subunits. The complex is composed of a catalytic core of 3 subunits MT-CO1, MT-CO2 and MT-CO3, encoded in the mitochondrial DNA, and 11 supernumerary subunits COX4I, COX5A, COX5B, COX6A, COX6B, COX6C, COX7A, COX7B, COX7C, COX8 and NDUFA4, which are encoded in the nuclear genome. The complex exists as a monomer or a dimer and forms supercomplexes (SCs) in the inner mitochondrial membrane with NADH-ubiquinone oxidoreductase (complex I, CI) and ubiquinol-cytochrome c oxidoreductase (cytochrome b-c1 complex, complex III, CIII), resulting in different assemblies (supercomplex SCI(1)III(2)IV(1) and megacomplex MCI(2)III(2)IV(2)) (By similarity). Found in a complex with TMEM177, COA6, COX18, COX20, SCO1 and SCO2. Interacts with TMEM177 in a COX20-dependent manner. Interacts with COX20. Interacts with COX16 (By similarity).</text>
</comment>
<comment type="subcellular location">
    <subcellularLocation>
        <location evidence="3">Mitochondrion inner membrane</location>
        <topology evidence="3">Multi-pass membrane protein</topology>
    </subcellularLocation>
</comment>
<comment type="similarity">
    <text evidence="4">Belongs to the cytochrome c oxidase subunit 2 family.</text>
</comment>
<sequence>MAHPSQLGLQDAASPVMEELLHFHDHALMIVFLISTLVFYIILAMMTTKMTDKYILDAQEIEIVWTLLPAIVLILVALPSLRILYLIDEVENPHLTIKAMGHQWYWSYEYTDYEELSFDSYMTPLQDLNPGQFRLLETDHRMVIPMESLIRVLISAEDVLHSWAVPALGVKMDAVPGRLNQITFMISRPGLYYGQCSEICGANHSFMPIVLEAIPLDPFEDWSSSMLEEAX</sequence>
<reference key="1">
    <citation type="journal article" date="1997" name="Genetics">
        <title>The complete DNA sequence of the mitochondrial genome of a 'living fossil,' the coelacanth (Latimeria chalumnae).</title>
        <authorList>
            <person name="Zardoya R."/>
            <person name="Meyer A."/>
        </authorList>
    </citation>
    <scope>NUCLEOTIDE SEQUENCE [LARGE SCALE GENOMIC DNA]</scope>
</reference>
<dbReference type="EC" id="7.1.1.9"/>
<dbReference type="EMBL" id="U82228">
    <property type="protein sequence ID" value="AAC60321.1"/>
    <property type="molecule type" value="Genomic_DNA"/>
</dbReference>
<dbReference type="PIR" id="D58892">
    <property type="entry name" value="D58892"/>
</dbReference>
<dbReference type="RefSeq" id="NP_008332.1">
    <property type="nucleotide sequence ID" value="NC_001804.1"/>
</dbReference>
<dbReference type="FunCoup" id="O03848">
    <property type="interactions" value="175"/>
</dbReference>
<dbReference type="STRING" id="7897.ENSLACP00000021808"/>
<dbReference type="GeneID" id="808086"/>
<dbReference type="KEGG" id="lcm:808086"/>
<dbReference type="CTD" id="4513"/>
<dbReference type="eggNOG" id="KOG4767">
    <property type="taxonomic scope" value="Eukaryota"/>
</dbReference>
<dbReference type="InParanoid" id="O03848"/>
<dbReference type="OrthoDB" id="539285at2759"/>
<dbReference type="TreeFam" id="TF344269"/>
<dbReference type="Proteomes" id="UP000008672">
    <property type="component" value="Mitochondrion"/>
</dbReference>
<dbReference type="GO" id="GO:0005743">
    <property type="term" value="C:mitochondrial inner membrane"/>
    <property type="evidence" value="ECO:0007669"/>
    <property type="project" value="UniProtKB-SubCell"/>
</dbReference>
<dbReference type="GO" id="GO:0045277">
    <property type="term" value="C:respiratory chain complex IV"/>
    <property type="evidence" value="ECO:0000250"/>
    <property type="project" value="UniProtKB"/>
</dbReference>
<dbReference type="GO" id="GO:0005507">
    <property type="term" value="F:copper ion binding"/>
    <property type="evidence" value="ECO:0007669"/>
    <property type="project" value="InterPro"/>
</dbReference>
<dbReference type="GO" id="GO:0004129">
    <property type="term" value="F:cytochrome-c oxidase activity"/>
    <property type="evidence" value="ECO:0007669"/>
    <property type="project" value="UniProtKB-EC"/>
</dbReference>
<dbReference type="GO" id="GO:0042773">
    <property type="term" value="P:ATP synthesis coupled electron transport"/>
    <property type="evidence" value="ECO:0007669"/>
    <property type="project" value="TreeGrafter"/>
</dbReference>
<dbReference type="CDD" id="cd13912">
    <property type="entry name" value="CcO_II_C"/>
    <property type="match status" value="1"/>
</dbReference>
<dbReference type="FunFam" id="1.10.287.90:FF:000001">
    <property type="entry name" value="Cytochrome c oxidase subunit 2"/>
    <property type="match status" value="1"/>
</dbReference>
<dbReference type="FunFam" id="2.60.40.420:FF:000001">
    <property type="entry name" value="Cytochrome c oxidase subunit 2"/>
    <property type="match status" value="1"/>
</dbReference>
<dbReference type="Gene3D" id="1.10.287.90">
    <property type="match status" value="1"/>
</dbReference>
<dbReference type="Gene3D" id="2.60.40.420">
    <property type="entry name" value="Cupredoxins - blue copper proteins"/>
    <property type="match status" value="1"/>
</dbReference>
<dbReference type="InterPro" id="IPR045187">
    <property type="entry name" value="CcO_II"/>
</dbReference>
<dbReference type="InterPro" id="IPR002429">
    <property type="entry name" value="CcO_II-like_C"/>
</dbReference>
<dbReference type="InterPro" id="IPR034210">
    <property type="entry name" value="CcO_II_C"/>
</dbReference>
<dbReference type="InterPro" id="IPR001505">
    <property type="entry name" value="Copper_CuA"/>
</dbReference>
<dbReference type="InterPro" id="IPR008972">
    <property type="entry name" value="Cupredoxin"/>
</dbReference>
<dbReference type="InterPro" id="IPR014222">
    <property type="entry name" value="Cyt_c_oxidase_su2"/>
</dbReference>
<dbReference type="InterPro" id="IPR011759">
    <property type="entry name" value="Cyt_c_oxidase_su2_TM_dom"/>
</dbReference>
<dbReference type="InterPro" id="IPR036257">
    <property type="entry name" value="Cyt_c_oxidase_su2_TM_sf"/>
</dbReference>
<dbReference type="NCBIfam" id="TIGR02866">
    <property type="entry name" value="CoxB"/>
    <property type="match status" value="1"/>
</dbReference>
<dbReference type="PANTHER" id="PTHR22888:SF9">
    <property type="entry name" value="CYTOCHROME C OXIDASE SUBUNIT 2"/>
    <property type="match status" value="1"/>
</dbReference>
<dbReference type="PANTHER" id="PTHR22888">
    <property type="entry name" value="CYTOCHROME C OXIDASE, SUBUNIT II"/>
    <property type="match status" value="1"/>
</dbReference>
<dbReference type="Pfam" id="PF00116">
    <property type="entry name" value="COX2"/>
    <property type="match status" value="1"/>
</dbReference>
<dbReference type="Pfam" id="PF02790">
    <property type="entry name" value="COX2_TM"/>
    <property type="match status" value="1"/>
</dbReference>
<dbReference type="PRINTS" id="PR01166">
    <property type="entry name" value="CYCOXIDASEII"/>
</dbReference>
<dbReference type="SUPFAM" id="SSF49503">
    <property type="entry name" value="Cupredoxins"/>
    <property type="match status" value="1"/>
</dbReference>
<dbReference type="SUPFAM" id="SSF81464">
    <property type="entry name" value="Cytochrome c oxidase subunit II-like, transmembrane region"/>
    <property type="match status" value="1"/>
</dbReference>
<dbReference type="PROSITE" id="PS00078">
    <property type="entry name" value="COX2"/>
    <property type="match status" value="1"/>
</dbReference>
<dbReference type="PROSITE" id="PS50857">
    <property type="entry name" value="COX2_CUA"/>
    <property type="match status" value="1"/>
</dbReference>
<dbReference type="PROSITE" id="PS50999">
    <property type="entry name" value="COX2_TM"/>
    <property type="match status" value="1"/>
</dbReference>
<name>COX2_LATCH</name>
<accession>O03848</accession>
<organism>
    <name type="scientific">Latimeria chalumnae</name>
    <name type="common">Coelacanth</name>
    <dbReference type="NCBI Taxonomy" id="7897"/>
    <lineage>
        <taxon>Eukaryota</taxon>
        <taxon>Metazoa</taxon>
        <taxon>Chordata</taxon>
        <taxon>Craniata</taxon>
        <taxon>Vertebrata</taxon>
        <taxon>Euteleostomi</taxon>
        <taxon>Coelacanthiformes</taxon>
        <taxon>Coelacanthidae</taxon>
        <taxon>Latimeria</taxon>
    </lineage>
</organism>